<reference key="1">
    <citation type="journal article" date="2001" name="Genome Res.">
        <title>Sequence and analysis of chromosome I of the amitochondriate intracellular parasite Encephalitozoon cuniculi (Microspora).</title>
        <authorList>
            <person name="Peyret P."/>
            <person name="Katinka M.D."/>
            <person name="Duprat S."/>
            <person name="Duffieux F."/>
            <person name="Barbe V."/>
            <person name="Barbazanges M."/>
            <person name="Weissenbach J."/>
            <person name="Saurin W."/>
            <person name="Vivares C.P."/>
        </authorList>
    </citation>
    <scope>NUCLEOTIDE SEQUENCE [LARGE SCALE GENOMIC DNA]</scope>
    <source>
        <strain>GB-M1</strain>
    </source>
</reference>
<reference key="2">
    <citation type="journal article" date="2001" name="Nature">
        <title>Genome sequence and gene compaction of the eukaryote parasite Encephalitozoon cuniculi.</title>
        <authorList>
            <person name="Katinka M.D."/>
            <person name="Duprat S."/>
            <person name="Cornillot E."/>
            <person name="Metenier G."/>
            <person name="Thomarat F."/>
            <person name="Prensier G."/>
            <person name="Barbe V."/>
            <person name="Peyretaillade E."/>
            <person name="Brottier P."/>
            <person name="Wincker P."/>
            <person name="Delbac F."/>
            <person name="El Alaoui H."/>
            <person name="Peyret P."/>
            <person name="Saurin W."/>
            <person name="Gouy M."/>
            <person name="Weissenbach J."/>
            <person name="Vivares C.P."/>
        </authorList>
    </citation>
    <scope>NUCLEOTIDE SEQUENCE [LARGE SCALE GENOMIC DNA]</scope>
    <source>
        <strain>GB-M1</strain>
    </source>
</reference>
<reference key="3">
    <citation type="journal article" date="2006" name="Proteomics">
        <title>Proteomic analysis of the eukaryotic parasite Encephalitozoon cuniculi (microsporidia): a reference map for proteins expressed in late sporogonial stages.</title>
        <authorList>
            <person name="Brosson D."/>
            <person name="Kuhn L."/>
            <person name="Delbac F."/>
            <person name="Garin J."/>
            <person name="Vivares C.P."/>
            <person name="Texier C."/>
        </authorList>
    </citation>
    <scope>IDENTIFICATION BY MASS SPECTROMETRY [LARGE SCALE ANALYSIS]</scope>
    <scope>DEVELOPMENTAL STAGE</scope>
</reference>
<keyword id="KW-0131">Cell cycle</keyword>
<keyword id="KW-0132">Cell division</keyword>
<keyword id="KW-0342">GTP-binding</keyword>
<keyword id="KW-0547">Nucleotide-binding</keyword>
<keyword id="KW-1185">Reference proteome</keyword>
<comment type="function">
    <text evidence="1">Septins are GTPases involved in cytokinesis. The septins localize to the site of cleavage and act as a structural scaffold that recruits different components involved in diverse processes at specific stages during the cell cycle. Septins are also involved in cell morphogenesis, chitin deposition, cell cycle regulation, cell compartmentalization and spore wall formation (By similarity).</text>
</comment>
<comment type="subunit">
    <text evidence="1">Component of the septin complex.</text>
</comment>
<comment type="developmental stage">
    <text evidence="3">Expressed in late sporogonial stages.</text>
</comment>
<comment type="similarity">
    <text evidence="2">Belongs to the TRAFAC class TrmE-Era-EngA-EngB-Septin-like GTPase superfamily. Septin GTPase family.</text>
</comment>
<gene>
    <name type="primary">CDC3</name>
    <name type="ordered locus">ECU01_1370</name>
</gene>
<dbReference type="EMBL" id="AL391737">
    <property type="protein sequence ID" value="CAD25010.1"/>
    <property type="molecule type" value="Genomic_DNA"/>
</dbReference>
<dbReference type="RefSeq" id="XP_965975.1">
    <property type="nucleotide sequence ID" value="XM_960882.1"/>
</dbReference>
<dbReference type="SMR" id="Q8SSI8"/>
<dbReference type="FunCoup" id="Q8SSI8">
    <property type="interactions" value="10"/>
</dbReference>
<dbReference type="STRING" id="284813.Q8SSI8"/>
<dbReference type="VEuPathDB" id="MicrosporidiaDB:ECU01_1370"/>
<dbReference type="HOGENOM" id="CLU_017718_8_0_1"/>
<dbReference type="InParanoid" id="Q8SSI8"/>
<dbReference type="OMA" id="AKFKRNI"/>
<dbReference type="OrthoDB" id="416553at2759"/>
<dbReference type="Proteomes" id="UP000000819">
    <property type="component" value="Chromosome I"/>
</dbReference>
<dbReference type="GO" id="GO:0005938">
    <property type="term" value="C:cell cortex"/>
    <property type="evidence" value="ECO:0007669"/>
    <property type="project" value="UniProtKB-ARBA"/>
</dbReference>
<dbReference type="GO" id="GO:0032156">
    <property type="term" value="C:septin cytoskeleton"/>
    <property type="evidence" value="ECO:0007669"/>
    <property type="project" value="UniProtKB-ARBA"/>
</dbReference>
<dbReference type="GO" id="GO:0005525">
    <property type="term" value="F:GTP binding"/>
    <property type="evidence" value="ECO:0007669"/>
    <property type="project" value="UniProtKB-KW"/>
</dbReference>
<dbReference type="GO" id="GO:0051301">
    <property type="term" value="P:cell division"/>
    <property type="evidence" value="ECO:0007669"/>
    <property type="project" value="UniProtKB-KW"/>
</dbReference>
<dbReference type="Gene3D" id="3.40.50.300">
    <property type="entry name" value="P-loop containing nucleotide triphosphate hydrolases"/>
    <property type="match status" value="1"/>
</dbReference>
<dbReference type="InterPro" id="IPR030379">
    <property type="entry name" value="G_SEPTIN_dom"/>
</dbReference>
<dbReference type="InterPro" id="IPR027417">
    <property type="entry name" value="P-loop_NTPase"/>
</dbReference>
<dbReference type="InterPro" id="IPR016491">
    <property type="entry name" value="Septin"/>
</dbReference>
<dbReference type="PANTHER" id="PTHR18884">
    <property type="entry name" value="SEPTIN"/>
    <property type="match status" value="1"/>
</dbReference>
<dbReference type="Pfam" id="PF00735">
    <property type="entry name" value="Septin"/>
    <property type="match status" value="1"/>
</dbReference>
<dbReference type="PIRSF" id="PIRSF006698">
    <property type="entry name" value="Septin"/>
    <property type="match status" value="1"/>
</dbReference>
<dbReference type="SUPFAM" id="SSF52540">
    <property type="entry name" value="P-loop containing nucleoside triphosphate hydrolases"/>
    <property type="match status" value="1"/>
</dbReference>
<dbReference type="PROSITE" id="PS51719">
    <property type="entry name" value="G_SEPTIN"/>
    <property type="match status" value="1"/>
</dbReference>
<feature type="chain" id="PRO_0000381762" description="Cell division control protein 3">
    <location>
        <begin position="1"/>
        <end position="371"/>
    </location>
</feature>
<feature type="domain" description="Septin-type G" evidence="2">
    <location>
        <begin position="22"/>
        <end position="307"/>
    </location>
</feature>
<feature type="region of interest" description="G1 motif" evidence="2">
    <location>
        <begin position="32"/>
        <end position="39"/>
    </location>
</feature>
<feature type="region of interest" description="G3 motif" evidence="2">
    <location>
        <begin position="113"/>
        <end position="116"/>
    </location>
</feature>
<feature type="region of interest" description="G4 motif" evidence="2">
    <location>
        <begin position="194"/>
        <end position="197"/>
    </location>
</feature>
<feature type="binding site" evidence="1">
    <location>
        <begin position="32"/>
        <end position="39"/>
    </location>
    <ligand>
        <name>GTP</name>
        <dbReference type="ChEBI" id="CHEBI:37565"/>
    </ligand>
</feature>
<feature type="binding site" evidence="1">
    <location>
        <position position="116"/>
    </location>
    <ligand>
        <name>GTP</name>
        <dbReference type="ChEBI" id="CHEBI:37565"/>
    </ligand>
</feature>
<feature type="binding site" evidence="1">
    <location>
        <begin position="195"/>
        <end position="203"/>
    </location>
    <ligand>
        <name>GTP</name>
        <dbReference type="ChEBI" id="CHEBI:37565"/>
    </ligand>
</feature>
<feature type="binding site" evidence="1">
    <location>
        <position position="257"/>
    </location>
    <ligand>
        <name>GTP</name>
        <dbReference type="ChEBI" id="CHEBI:37565"/>
    </ligand>
</feature>
<protein>
    <recommendedName>
        <fullName>Cell division control protein 3</fullName>
    </recommendedName>
</protein>
<accession>Q8SSI8</accession>
<sequence>MAQKGIGVSNLPNVKYRSFCKAGIDFNIMTVGSNGLGKSSFINQMLGDSILSSDPFLKPEDGHHSNETVRALDEDIVDDPESKYFHRNSLINIQISKFFVMENDFQTRVTVTEVDGVGDGVCNEGCWDPIVELIQDNFRDYLDQERKNVRSLIKDKRIHICLYFLEPNPSHVSLVDIRTMKEISKICNLIPVVGKSDLLSDSEREECRNRIVEVLSMENIDVFRLDILEKEKISRTESPFFIIAKNVNSGDSSGHNREYPWGTMFPEKVESNDFYFLVDSLIAKNLIRLVETTEVFYDEYKTREIGLSIASKPGALGEDDRRLTKEIQKKIKEDERTIVELRQKLIEKRKYYESKMLEITSKYSNEKINSS</sequence>
<organism>
    <name type="scientific">Encephalitozoon cuniculi (strain GB-M1)</name>
    <name type="common">Microsporidian parasite</name>
    <dbReference type="NCBI Taxonomy" id="284813"/>
    <lineage>
        <taxon>Eukaryota</taxon>
        <taxon>Fungi</taxon>
        <taxon>Fungi incertae sedis</taxon>
        <taxon>Microsporidia</taxon>
        <taxon>Unikaryonidae</taxon>
        <taxon>Encephalitozoon</taxon>
    </lineage>
</organism>
<evidence type="ECO:0000250" key="1"/>
<evidence type="ECO:0000255" key="2">
    <source>
        <dbReference type="PROSITE-ProRule" id="PRU01056"/>
    </source>
</evidence>
<evidence type="ECO:0000269" key="3">
    <source>
    </source>
</evidence>
<name>CDC3_ENCCU</name>
<proteinExistence type="evidence at protein level"/>